<reference key="1">
    <citation type="journal article" date="1984" name="J. Mol. Biol.">
        <title>Nucleotide sequence of the trfA gene of broad host-range plasmid RK2.</title>
        <authorList>
            <person name="Smith C.A."/>
            <person name="Thomas C.M."/>
        </authorList>
    </citation>
    <scope>NUCLEOTIDE SEQUENCE [GENOMIC DNA]</scope>
    <source>
        <plasmid>IncP-alpha RK2</plasmid>
    </source>
</reference>
<reference key="2">
    <citation type="journal article" date="1996" name="J. Biol. Chem.">
        <title>The plasmid RK2 initiation protein binds to the origin of replication as a monomer.</title>
        <authorList>
            <person name="Toukdarian A.E."/>
            <person name="Helinski D.R."/>
            <person name="Perri S."/>
        </authorList>
    </citation>
    <scope>SUBUNIT</scope>
    <scope>DNA-BINDING</scope>
    <source>
        <plasmid>IncP-alpha RK2</plasmid>
    </source>
</reference>
<reference key="3">
    <citation type="journal article" date="1996" name="Proc. Natl. Acad. Sci. U.S.A.">
        <title>Copy-up mutants of the plasmid RK2 replication initiation protein are defective in coupling RK2 replication origins.</title>
        <authorList>
            <person name="Blasina A."/>
            <person name="Kittell B.L."/>
            <person name="Toukdarian A.E."/>
            <person name="Helinski D.R."/>
        </authorList>
    </citation>
    <scope>FUNCTION IN PLASMID COPY NUMBER</scope>
    <scope>DNA-BINDING</scope>
    <scope>MUTAGENESIS OF GLY-254 AND SER-267</scope>
    <source>
        <plasmid>IncP-alpha RK2</plasmid>
    </source>
</reference>
<reference key="4">
    <citation type="journal article" date="1997" name="J. Biol. Chem.">
        <title>Role of TrfA and DnaA proteins in origin opening during initiation of DNA replication of the broad host range plasmid RK2.</title>
        <authorList>
            <person name="Konieczny I."/>
            <person name="Doran K.S."/>
            <person name="Helinski D.R."/>
            <person name="Blasina A."/>
        </authorList>
    </citation>
    <scope>FUNCTION IN DNA REPLICATION</scope>
    <scope>DNA-BINDING</scope>
    <scope>MUTAGENESIS OF GLY-254 AND SER-267</scope>
    <source>
        <plasmid>IncP-alpha RK2</plasmid>
    </source>
</reference>
<reference key="5">
    <citation type="journal article" date="2000" name="J. Bacteriol.">
        <title>Isolation of an inner membrane-derived subfraction that supports in vitro replication of a mini-RK2 plasmid in Escherichia coli.</title>
        <authorList>
            <person name="Kim P.D."/>
            <person name="Firshein W."/>
        </authorList>
    </citation>
    <scope>SUBCELLULAR LOCATION</scope>
    <source>
        <strain>CSR603</strain>
        <plasmid>IncP-alpha RK2</plasmid>
    </source>
</reference>
<reference key="6">
    <citation type="journal article" date="2000" name="Plasmid">
        <title>Identification of a potential membrane-targeting region of the replication initiator protein (TrfA) of broad-host-range plasmid RK2.</title>
        <authorList>
            <person name="Kim P.D."/>
            <person name="Rosche T.M."/>
            <person name="Firshein W."/>
        </authorList>
    </citation>
    <scope>SUBCELLULAR LOCATION</scope>
    <scope>TOXIC FRAGMENT</scope>
    <scope>MUTAGENESIS OF 286-VAL--ALA-297; 289-ASP--GLU-291; 293-VAL--VAL-294 AND PHE-296</scope>
    <source>
        <strain>K12 / DH5-alpha</strain>
        <plasmid>IncP-alpha RK2</plasmid>
    </source>
</reference>
<reference key="7">
    <citation type="journal article" date="2003" name="J. Bacteriol.">
        <title>Identification of a novel membrane-associated gene product that suppresses toxicity of a TrfA peptide from plasmid RK2 and its relationship to the DnaA host initiation protein.</title>
        <authorList>
            <person name="Kim P.D."/>
            <person name="Banack T."/>
            <person name="Lerman D.M."/>
            <person name="Tracy J.C."/>
            <person name="Camara J.E."/>
            <person name="Crooke E."/>
            <person name="Oliver D."/>
            <person name="Firshein W."/>
        </authorList>
    </citation>
    <scope>INTERACTION WITH HDA</scope>
    <source>
        <strain>B / BL21-DE3</strain>
        <plasmid>IncP-alpha RK2</plasmid>
    </source>
</reference>
<keyword id="KW-0024">Alternative initiation</keyword>
<keyword id="KW-0997">Cell inner membrane</keyword>
<keyword id="KW-1003">Cell membrane</keyword>
<keyword id="KW-0235">DNA replication</keyword>
<keyword id="KW-0238">DNA-binding</keyword>
<keyword id="KW-0472">Membrane</keyword>
<keyword id="KW-0614">Plasmid</keyword>
<keyword id="KW-0615">Plasmid copy control</keyword>
<protein>
    <recommendedName>
        <fullName>Plasmid replication initiator protein TrfA</fullName>
    </recommendedName>
</protein>
<name>TRFA_ECOLX</name>
<geneLocation type="plasmid">
    <name>IncP-alpha RK2</name>
</geneLocation>
<accession>P07676</accession>
<organism>
    <name type="scientific">Escherichia coli</name>
    <dbReference type="NCBI Taxonomy" id="562"/>
    <lineage>
        <taxon>Bacteria</taxon>
        <taxon>Pseudomonadati</taxon>
        <taxon>Pseudomonadota</taxon>
        <taxon>Gammaproteobacteria</taxon>
        <taxon>Enterobacterales</taxon>
        <taxon>Enterobacteriaceae</taxon>
        <taxon>Escherichia</taxon>
    </lineage>
</organism>
<dbReference type="EMBL" id="X00713">
    <property type="protein sequence ID" value="CAA25306.1"/>
    <property type="molecule type" value="Genomic_DNA"/>
</dbReference>
<dbReference type="PIR" id="S08595">
    <property type="entry name" value="S08595"/>
</dbReference>
<dbReference type="RefSeq" id="WP_001082279.1">
    <property type="nucleotide sequence ID" value="NZ_VMTS01000065.1"/>
</dbReference>
<dbReference type="SMR" id="P07676"/>
<dbReference type="GO" id="GO:0005886">
    <property type="term" value="C:plasma membrane"/>
    <property type="evidence" value="ECO:0007669"/>
    <property type="project" value="UniProtKB-SubCell"/>
</dbReference>
<dbReference type="GO" id="GO:0003677">
    <property type="term" value="F:DNA binding"/>
    <property type="evidence" value="ECO:0007669"/>
    <property type="project" value="UniProtKB-KW"/>
</dbReference>
<dbReference type="GO" id="GO:0006260">
    <property type="term" value="P:DNA replication"/>
    <property type="evidence" value="ECO:0007669"/>
    <property type="project" value="UniProtKB-KW"/>
</dbReference>
<dbReference type="GO" id="GO:0006276">
    <property type="term" value="P:plasmid maintenance"/>
    <property type="evidence" value="ECO:0007669"/>
    <property type="project" value="UniProtKB-KW"/>
</dbReference>
<dbReference type="InterPro" id="IPR010751">
    <property type="entry name" value="TrfA"/>
</dbReference>
<dbReference type="Pfam" id="PF07042">
    <property type="entry name" value="TrfA"/>
    <property type="match status" value="1"/>
</dbReference>
<gene>
    <name type="primary">trfA</name>
</gene>
<proteinExistence type="evidence at protein level"/>
<comment type="function">
    <text>Required for initiation of plasmid DNA replication, along with host-derived DnaA and other host proteins. Both forms of the protein are capable of initiating plasmid replication in a number of Gram-negative bacteria. Binds to 8 17-base pair repeat sequences (iterons) in the RK2 minimal replication origin (oriV), opening the origin of replication. oriV opening does not absolutely require the presence of nucleotides; formation of open complex is somewhat enhanced by ATP or ATP gamma S, while DnaA or HU is required for full opening.</text>
</comment>
<comment type="function">
    <text>Also involved in plasmid copy number control, promoting intermolecular coupling of protein bound iterons at oriV, which inhibits replication initiation.</text>
</comment>
<comment type="subunit">
    <text evidence="4">Forms a dimer in solution, binds DNA as a monomer. Both mononer and dimer of the short form interact with Hda (Dp).</text>
</comment>
<comment type="subcellular location">
    <subcellularLocation>
        <location evidence="1 2">Cell inner membrane</location>
        <topology evidence="1 2">Peripheral membrane protein</topology>
    </subcellularLocation>
    <text>Probably the site where plasmid replication is initiated.</text>
</comment>
<comment type="alternative products">
    <event type="alternative initiation"/>
    <isoform>
        <id>P07676-1</id>
        <name>TrfA</name>
        <sequence type="displayed"/>
    </isoform>
    <isoform>
        <id>P07676-2</id>
        <name>TrfA*</name>
        <sequence type="described" ref="VSP_018862"/>
    </isoform>
</comment>
<comment type="miscellaneous">
    <text>This broad-host-range plasmid is capable of replicating in a number of Gram-negative bacteria.</text>
</comment>
<evidence type="ECO:0000269" key="1">
    <source>
    </source>
</evidence>
<evidence type="ECO:0000269" key="2">
    <source>
    </source>
</evidence>
<evidence type="ECO:0000269" key="3">
    <source>
    </source>
</evidence>
<evidence type="ECO:0000269" key="4">
    <source>
    </source>
</evidence>
<evidence type="ECO:0000269" key="5">
    <source>
    </source>
</evidence>
<evidence type="ECO:0000305" key="6"/>
<feature type="chain" id="PRO_0000024513" description="Plasmid replication initiator protein TrfA">
    <location>
        <begin position="1"/>
        <end position="382"/>
    </location>
</feature>
<feature type="DNA-binding region" description="H-T-H motif" evidence="6">
    <location>
        <begin position="246"/>
        <end position="265"/>
    </location>
</feature>
<feature type="region of interest" description="Toxic in E.coli strain K12 / DH5-alpha; may be membrane-associated">
    <location>
        <begin position="1"/>
        <end position="163"/>
    </location>
</feature>
<feature type="region of interest" description="Hydrophobic region (HR); required for membrane association">
    <location>
        <begin position="286"/>
        <end position="297"/>
    </location>
</feature>
<feature type="splice variant" id="VSP_018862" description="In isoform TrfA*." evidence="6">
    <location>
        <begin position="1"/>
        <end position="97"/>
    </location>
</feature>
<feature type="mutagenesis site" description="16-fold increased plasmid copy number. Uncontrolled replication, in the active monomer form, increased DNA-binding, loss of intermolecular coupling; when associated with L-267." evidence="3 5">
    <original>G</original>
    <variation>D</variation>
    <location>
        <position position="254"/>
    </location>
</feature>
<feature type="mutagenesis site" description="23-fold increased plasmid copy number. Uncontrolled in the active monomer form, increased DNA-binding, loss of intermolecular coupling; when associated with D-254." evidence="3 5">
    <original>S</original>
    <variation>L</variation>
    <location>
        <position position="267"/>
    </location>
</feature>
<feature type="mutagenesis site" description="Loss of membrane association, no plasmid replication, less protein produced." evidence="2">
    <original>VLIDEEIVVLFA</original>
    <variation>SR</variation>
    <location>
        <begin position="286"/>
        <end position="297"/>
    </location>
</feature>
<feature type="mutagenesis site" description="Decreased membrane association, impaired plasmid replication." evidence="2">
    <original>DEE</original>
    <variation>AAA</variation>
    <location>
        <begin position="289"/>
        <end position="291"/>
    </location>
</feature>
<feature type="mutagenesis site" description="No change in membrane association, impaired plasmid replication." evidence="2">
    <original>DEE</original>
    <variation>NQQ</variation>
    <location>
        <begin position="289"/>
        <end position="291"/>
    </location>
</feature>
<feature type="mutagenesis site" description="Loss of membrane association, no plasmid replication, less protein produced." evidence="2">
    <original>VV</original>
    <variation>TT</variation>
    <location>
        <begin position="293"/>
        <end position="294"/>
    </location>
</feature>
<feature type="mutagenesis site" description="Decreased membrane association, impaired plasmid replication." evidence="2">
    <original>F</original>
    <variation>A</variation>
    <location>
        <position position="296"/>
    </location>
</feature>
<sequence>MNRTFDRKAYRQELIDAGFSAEDAETIASRTVMRAPRETFQSVGSMVQQATAKIERDSVQLAPPALPAPSAAVERSRRLEQEAAGLAKSMTIDTRGTMTTKKRKTAGEDLAKQVSEAKQAALLKHTKQQIKEMQLSLFDIAPWPDTMRAMPNDTARSALFTTRNKKIPREALQNKVIFHVNKDVKITYTGVELRADDDELVWQQVLEYAKRTPIGEPITFTFYELCQDLGWSINGRYYTKAEECLSRLQATAMGFTSDRVGHLESVSLLHRFRVLDRGKKTSRCQVLIDEEIVVLFAGDHYTKFIWEKYRKLSPTARRMFDYFSSHREPYPLKLETFRLMCGSDSTRVKKWREQVGEACEELRGSGLVEHAWVNDDLVHCKR</sequence>